<proteinExistence type="predicted"/>
<keyword id="KW-0238">DNA-binding</keyword>
<keyword id="KW-0804">Transcription</keyword>
<keyword id="KW-0805">Transcription regulation</keyword>
<protein>
    <recommendedName>
        <fullName>Putative HTH-type transcriptional regulator RmpR</fullName>
    </recommendedName>
    <alternativeName>
        <fullName>DNA-binding regulatory protein RmpR</fullName>
    </alternativeName>
</protein>
<organism>
    <name type="scientific">Mycobacterium gastri</name>
    <dbReference type="NCBI Taxonomy" id="1777"/>
    <lineage>
        <taxon>Bacteria</taxon>
        <taxon>Bacillati</taxon>
        <taxon>Actinomycetota</taxon>
        <taxon>Actinomycetes</taxon>
        <taxon>Mycobacteriales</taxon>
        <taxon>Mycobacteriaceae</taxon>
        <taxon>Mycobacterium</taxon>
    </lineage>
</organism>
<sequence>MATPTPFQSQIYRSLPEIERADAIVERISKAIALGLLKVGERLPPEAALSEMFGVGGATLREALSELRERGVVETRRGRSGGTFVVNQPEPETDIMREWFLSTSISEIRDIGDEHSAIAAATIRLACERAEAHDFDRLQELARALVLAETPETRASADSRFHIELAVSAQSPRLANAEIRLQEETVRQLWAPFTVAEAYDPERATAEHLELVRAVAQDQPERAQKLTLEHIRRNIFHLIDTKLVLGYAQSRPSSPATAPDGSSSAEAAMIQEGQ</sequence>
<dbReference type="EMBL" id="AB034913">
    <property type="protein sequence ID" value="BAA90544.1"/>
    <property type="status" value="ALT_INIT"/>
    <property type="molecule type" value="Genomic_DNA"/>
</dbReference>
<dbReference type="SMR" id="Q9LBW6"/>
<dbReference type="GO" id="GO:0003677">
    <property type="term" value="F:DNA binding"/>
    <property type="evidence" value="ECO:0007669"/>
    <property type="project" value="UniProtKB-KW"/>
</dbReference>
<dbReference type="GO" id="GO:0003700">
    <property type="term" value="F:DNA-binding transcription factor activity"/>
    <property type="evidence" value="ECO:0007669"/>
    <property type="project" value="InterPro"/>
</dbReference>
<dbReference type="CDD" id="cd07377">
    <property type="entry name" value="WHTH_GntR"/>
    <property type="match status" value="1"/>
</dbReference>
<dbReference type="Gene3D" id="1.20.120.530">
    <property type="entry name" value="GntR ligand-binding domain-like"/>
    <property type="match status" value="1"/>
</dbReference>
<dbReference type="Gene3D" id="1.10.10.10">
    <property type="entry name" value="Winged helix-like DNA-binding domain superfamily/Winged helix DNA-binding domain"/>
    <property type="match status" value="1"/>
</dbReference>
<dbReference type="InterPro" id="IPR011711">
    <property type="entry name" value="GntR_C"/>
</dbReference>
<dbReference type="InterPro" id="IPR008920">
    <property type="entry name" value="TF_FadR/GntR_C"/>
</dbReference>
<dbReference type="InterPro" id="IPR000524">
    <property type="entry name" value="Tscrpt_reg_HTH_GntR"/>
</dbReference>
<dbReference type="InterPro" id="IPR036388">
    <property type="entry name" value="WH-like_DNA-bd_sf"/>
</dbReference>
<dbReference type="InterPro" id="IPR036390">
    <property type="entry name" value="WH_DNA-bd_sf"/>
</dbReference>
<dbReference type="PANTHER" id="PTHR43537:SF24">
    <property type="entry name" value="GLUCONATE OPERON TRANSCRIPTIONAL REPRESSOR"/>
    <property type="match status" value="1"/>
</dbReference>
<dbReference type="PANTHER" id="PTHR43537">
    <property type="entry name" value="TRANSCRIPTIONAL REGULATOR, GNTR FAMILY"/>
    <property type="match status" value="1"/>
</dbReference>
<dbReference type="Pfam" id="PF07729">
    <property type="entry name" value="FCD"/>
    <property type="match status" value="1"/>
</dbReference>
<dbReference type="Pfam" id="PF00392">
    <property type="entry name" value="GntR"/>
    <property type="match status" value="1"/>
</dbReference>
<dbReference type="SMART" id="SM00895">
    <property type="entry name" value="FCD"/>
    <property type="match status" value="1"/>
</dbReference>
<dbReference type="SMART" id="SM00345">
    <property type="entry name" value="HTH_GNTR"/>
    <property type="match status" value="1"/>
</dbReference>
<dbReference type="SUPFAM" id="SSF48008">
    <property type="entry name" value="GntR ligand-binding domain-like"/>
    <property type="match status" value="1"/>
</dbReference>
<dbReference type="SUPFAM" id="SSF46785">
    <property type="entry name" value="Winged helix' DNA-binding domain"/>
    <property type="match status" value="1"/>
</dbReference>
<dbReference type="PROSITE" id="PS50949">
    <property type="entry name" value="HTH_GNTR"/>
    <property type="match status" value="1"/>
</dbReference>
<comment type="function">
    <text evidence="3">May regulate the transcription of the rmpAB operon.</text>
</comment>
<comment type="sequence caution" evidence="3">
    <conflict type="erroneous initiation">
        <sequence resource="EMBL-CDS" id="BAA90544"/>
    </conflict>
</comment>
<feature type="chain" id="PRO_0000234658" description="Putative HTH-type transcriptional regulator RmpR">
    <location>
        <begin position="1"/>
        <end position="274"/>
    </location>
</feature>
<feature type="domain" description="HTH gntR-type" evidence="1">
    <location>
        <begin position="18"/>
        <end position="88"/>
    </location>
</feature>
<feature type="DNA-binding region" description="H-T-H motif" evidence="1">
    <location>
        <begin position="46"/>
        <end position="65"/>
    </location>
</feature>
<feature type="region of interest" description="Disordered" evidence="2">
    <location>
        <begin position="250"/>
        <end position="274"/>
    </location>
</feature>
<feature type="compositionally biased region" description="Polar residues" evidence="2">
    <location>
        <begin position="250"/>
        <end position="265"/>
    </location>
</feature>
<evidence type="ECO:0000255" key="1">
    <source>
        <dbReference type="PROSITE-ProRule" id="PRU00307"/>
    </source>
</evidence>
<evidence type="ECO:0000256" key="2">
    <source>
        <dbReference type="SAM" id="MobiDB-lite"/>
    </source>
</evidence>
<evidence type="ECO:0000305" key="3"/>
<accession>Q9LBW6</accession>
<name>RMPR_MYCGS</name>
<reference key="1">
    <citation type="journal article" date="2000" name="J. Bacteriol.">
        <title>A novel operon encoding formaldehyde fixation: the ribulose monophosphate pathway in the Gram-positive facultative methylotrophic bacterium Mycobacterium gastri MB19.</title>
        <authorList>
            <person name="Mitsui R."/>
            <person name="Sakai Y."/>
            <person name="Yasueda H."/>
            <person name="Kato N."/>
        </authorList>
    </citation>
    <scope>NUCLEOTIDE SEQUENCE [GENOMIC DNA]</scope>
    <scope>PUTATIVE FUNCTION</scope>
    <source>
        <strain>MB19</strain>
    </source>
</reference>
<gene>
    <name type="primary">rmpR</name>
</gene>